<gene>
    <name evidence="1" type="primary">fieF</name>
    <name type="ordered locus">Spro_4808</name>
</gene>
<proteinExistence type="inferred from homology"/>
<accession>A8GLB1</accession>
<evidence type="ECO:0000255" key="1">
    <source>
        <dbReference type="HAMAP-Rule" id="MF_01425"/>
    </source>
</evidence>
<protein>
    <recommendedName>
        <fullName evidence="1">Cation-efflux pump FieF</fullName>
    </recommendedName>
</protein>
<organism>
    <name type="scientific">Serratia proteamaculans (strain 568)</name>
    <dbReference type="NCBI Taxonomy" id="399741"/>
    <lineage>
        <taxon>Bacteria</taxon>
        <taxon>Pseudomonadati</taxon>
        <taxon>Pseudomonadota</taxon>
        <taxon>Gammaproteobacteria</taxon>
        <taxon>Enterobacterales</taxon>
        <taxon>Yersiniaceae</taxon>
        <taxon>Serratia</taxon>
    </lineage>
</organism>
<reference key="1">
    <citation type="submission" date="2007-09" db="EMBL/GenBank/DDBJ databases">
        <title>Complete sequence of chromosome of Serratia proteamaculans 568.</title>
        <authorList>
            <consortium name="US DOE Joint Genome Institute"/>
            <person name="Copeland A."/>
            <person name="Lucas S."/>
            <person name="Lapidus A."/>
            <person name="Barry K."/>
            <person name="Glavina del Rio T."/>
            <person name="Dalin E."/>
            <person name="Tice H."/>
            <person name="Pitluck S."/>
            <person name="Chain P."/>
            <person name="Malfatti S."/>
            <person name="Shin M."/>
            <person name="Vergez L."/>
            <person name="Schmutz J."/>
            <person name="Larimer F."/>
            <person name="Land M."/>
            <person name="Hauser L."/>
            <person name="Kyrpides N."/>
            <person name="Kim E."/>
            <person name="Taghavi S."/>
            <person name="Newman L."/>
            <person name="Vangronsveld J."/>
            <person name="van der Lelie D."/>
            <person name="Richardson P."/>
        </authorList>
    </citation>
    <scope>NUCLEOTIDE SEQUENCE [LARGE SCALE GENOMIC DNA]</scope>
    <source>
        <strain>568</strain>
    </source>
</reference>
<sequence>MEPQYARLVKSAALAATALASILLLIKIVAWYHTGSVSLLAALVDSLVDIAASLTNLLVVRYSLQPADEEHTFGHGKAESLAALAQSMFISGSALFLFLTGFQHLYSPETLRDPGVGIAVTVVALFSTLLLVTYQRWVVRKTRSQAVRADMLHYQSDVMMNGAILIALALSWYGFQRADALFALAIGVYILYSALRMGHEAVQSLLDRALPDDERQAIIDVISSWPGVKGAHDLRTRQSGPTRFIQLHLEMDDALPLMQAHLLAEQVEQALLHRFPGADVLIHQDPCSVVPEGRQGRWEL</sequence>
<name>FIEF_SERP5</name>
<dbReference type="EMBL" id="CP000826">
    <property type="protein sequence ID" value="ABV43901.1"/>
    <property type="molecule type" value="Genomic_DNA"/>
</dbReference>
<dbReference type="SMR" id="A8GLB1"/>
<dbReference type="STRING" id="399741.Spro_4808"/>
<dbReference type="KEGG" id="spe:Spro_4808"/>
<dbReference type="eggNOG" id="COG0053">
    <property type="taxonomic scope" value="Bacteria"/>
</dbReference>
<dbReference type="HOGENOM" id="CLU_013430_3_0_6"/>
<dbReference type="OrthoDB" id="9806522at2"/>
<dbReference type="GO" id="GO:0005886">
    <property type="term" value="C:plasma membrane"/>
    <property type="evidence" value="ECO:0007669"/>
    <property type="project" value="UniProtKB-SubCell"/>
</dbReference>
<dbReference type="GO" id="GO:0015086">
    <property type="term" value="F:cadmium ion transmembrane transporter activity"/>
    <property type="evidence" value="ECO:0007669"/>
    <property type="project" value="UniProtKB-UniRule"/>
</dbReference>
<dbReference type="GO" id="GO:0015093">
    <property type="term" value="F:ferrous iron transmembrane transporter activity"/>
    <property type="evidence" value="ECO:0007669"/>
    <property type="project" value="TreeGrafter"/>
</dbReference>
<dbReference type="GO" id="GO:0046872">
    <property type="term" value="F:metal ion binding"/>
    <property type="evidence" value="ECO:0007669"/>
    <property type="project" value="UniProtKB-KW"/>
</dbReference>
<dbReference type="GO" id="GO:0015341">
    <property type="term" value="F:zinc efflux antiporter activity"/>
    <property type="evidence" value="ECO:0007669"/>
    <property type="project" value="TreeGrafter"/>
</dbReference>
<dbReference type="GO" id="GO:0006882">
    <property type="term" value="P:intracellular zinc ion homeostasis"/>
    <property type="evidence" value="ECO:0007669"/>
    <property type="project" value="TreeGrafter"/>
</dbReference>
<dbReference type="FunFam" id="1.20.1510.10:FF:000001">
    <property type="entry name" value="Ferrous-iron efflux pump FieF"/>
    <property type="match status" value="1"/>
</dbReference>
<dbReference type="FunFam" id="3.30.70.1350:FF:000002">
    <property type="entry name" value="Ferrous-iron efflux pump FieF"/>
    <property type="match status" value="1"/>
</dbReference>
<dbReference type="Gene3D" id="1.20.1510.10">
    <property type="entry name" value="Cation efflux protein transmembrane domain"/>
    <property type="match status" value="1"/>
</dbReference>
<dbReference type="Gene3D" id="3.30.70.1350">
    <property type="entry name" value="Cation efflux protein, cytoplasmic domain"/>
    <property type="match status" value="1"/>
</dbReference>
<dbReference type="HAMAP" id="MF_01425">
    <property type="entry name" value="Cation_efflux_FieF"/>
    <property type="match status" value="1"/>
</dbReference>
<dbReference type="InterPro" id="IPR002524">
    <property type="entry name" value="Cation_efflux"/>
</dbReference>
<dbReference type="InterPro" id="IPR027470">
    <property type="entry name" value="Cation_efflux_CTD"/>
</dbReference>
<dbReference type="InterPro" id="IPR036837">
    <property type="entry name" value="Cation_efflux_CTD_sf"/>
</dbReference>
<dbReference type="InterPro" id="IPR023783">
    <property type="entry name" value="Cation_efflux_FieF"/>
</dbReference>
<dbReference type="InterPro" id="IPR027469">
    <property type="entry name" value="Cation_efflux_TMD_sf"/>
</dbReference>
<dbReference type="InterPro" id="IPR050291">
    <property type="entry name" value="CDF_Transporter"/>
</dbReference>
<dbReference type="NCBIfam" id="TIGR01297">
    <property type="entry name" value="CDF"/>
    <property type="match status" value="1"/>
</dbReference>
<dbReference type="NCBIfam" id="NF007064">
    <property type="entry name" value="PRK09509.1"/>
    <property type="match status" value="1"/>
</dbReference>
<dbReference type="PANTHER" id="PTHR43840:SF41">
    <property type="entry name" value="CATION-EFFLUX PUMP FIEF"/>
    <property type="match status" value="1"/>
</dbReference>
<dbReference type="PANTHER" id="PTHR43840">
    <property type="entry name" value="MITOCHONDRIAL METAL TRANSPORTER 1-RELATED"/>
    <property type="match status" value="1"/>
</dbReference>
<dbReference type="Pfam" id="PF01545">
    <property type="entry name" value="Cation_efflux"/>
    <property type="match status" value="1"/>
</dbReference>
<dbReference type="Pfam" id="PF16916">
    <property type="entry name" value="ZT_dimer"/>
    <property type="match status" value="1"/>
</dbReference>
<dbReference type="SUPFAM" id="SSF160240">
    <property type="entry name" value="Cation efflux protein cytoplasmic domain-like"/>
    <property type="match status" value="1"/>
</dbReference>
<dbReference type="SUPFAM" id="SSF161111">
    <property type="entry name" value="Cation efflux protein transmembrane domain-like"/>
    <property type="match status" value="1"/>
</dbReference>
<comment type="function">
    <text evidence="1">Divalent metal cation transporter which exports Zn(2+), Cd(2+) and possibly Fe(2+). May be involved in zinc and iron detoxification by efflux.</text>
</comment>
<comment type="catalytic activity">
    <reaction evidence="1">
        <text>Zn(2+)(in) + H(+)(out) = Zn(2+)(out) + H(+)(in)</text>
        <dbReference type="Rhea" id="RHEA:28839"/>
        <dbReference type="ChEBI" id="CHEBI:15378"/>
        <dbReference type="ChEBI" id="CHEBI:29105"/>
    </reaction>
</comment>
<comment type="catalytic activity">
    <reaction evidence="1">
        <text>Cd(2+)(in) + H(+)(out) = Cd(2+)(out) + H(+)(in)</text>
        <dbReference type="Rhea" id="RHEA:28739"/>
        <dbReference type="ChEBI" id="CHEBI:15378"/>
        <dbReference type="ChEBI" id="CHEBI:48775"/>
    </reaction>
</comment>
<comment type="catalytic activity">
    <reaction evidence="1">
        <text>Fe(2+)(in) + H(+)(out) = Fe(2+)(out) + H(+)(in)</text>
        <dbReference type="Rhea" id="RHEA:29439"/>
        <dbReference type="ChEBI" id="CHEBI:15378"/>
        <dbReference type="ChEBI" id="CHEBI:29033"/>
    </reaction>
</comment>
<comment type="subunit">
    <text evidence="1">Homodimer.</text>
</comment>
<comment type="subcellular location">
    <subcellularLocation>
        <location evidence="1">Cell inner membrane</location>
        <topology evidence="1">Multi-pass membrane protein</topology>
    </subcellularLocation>
</comment>
<comment type="similarity">
    <text evidence="1">Belongs to the cation diffusion facilitator (CDF) transporter (TC 2.A.4) family. FieF subfamily.</text>
</comment>
<keyword id="KW-0997">Cell inner membrane</keyword>
<keyword id="KW-1003">Cell membrane</keyword>
<keyword id="KW-0406">Ion transport</keyword>
<keyword id="KW-0408">Iron</keyword>
<keyword id="KW-0410">Iron transport</keyword>
<keyword id="KW-0472">Membrane</keyword>
<keyword id="KW-0479">Metal-binding</keyword>
<keyword id="KW-0812">Transmembrane</keyword>
<keyword id="KW-1133">Transmembrane helix</keyword>
<keyword id="KW-0813">Transport</keyword>
<keyword id="KW-0862">Zinc</keyword>
<keyword id="KW-0864">Zinc transport</keyword>
<feature type="chain" id="PRO_1000068513" description="Cation-efflux pump FieF">
    <location>
        <begin position="1"/>
        <end position="300"/>
    </location>
</feature>
<feature type="transmembrane region" description="Helical" evidence="1">
    <location>
        <begin position="12"/>
        <end position="32"/>
    </location>
</feature>
<feature type="transmembrane region" description="Helical" evidence="1">
    <location>
        <begin position="40"/>
        <end position="60"/>
    </location>
</feature>
<feature type="transmembrane region" description="Helical" evidence="1">
    <location>
        <begin position="82"/>
        <end position="102"/>
    </location>
</feature>
<feature type="transmembrane region" description="Helical" evidence="1">
    <location>
        <begin position="114"/>
        <end position="134"/>
    </location>
</feature>
<feature type="transmembrane region" description="Helical" evidence="1">
    <location>
        <begin position="155"/>
        <end position="175"/>
    </location>
</feature>
<feature type="transmembrane region" description="Helical" evidence="1">
    <location>
        <begin position="178"/>
        <end position="198"/>
    </location>
</feature>
<feature type="binding site" evidence="1">
    <location>
        <position position="45"/>
    </location>
    <ligand>
        <name>Zn(2+)</name>
        <dbReference type="ChEBI" id="CHEBI:29105"/>
    </ligand>
</feature>
<feature type="binding site" evidence="1">
    <location>
        <position position="49"/>
    </location>
    <ligand>
        <name>Zn(2+)</name>
        <dbReference type="ChEBI" id="CHEBI:29105"/>
    </ligand>
</feature>
<feature type="binding site" evidence="1">
    <location>
        <position position="153"/>
    </location>
    <ligand>
        <name>Zn(2+)</name>
        <dbReference type="ChEBI" id="CHEBI:29105"/>
    </ligand>
</feature>
<feature type="binding site" evidence="1">
    <location>
        <position position="157"/>
    </location>
    <ligand>
        <name>Zn(2+)</name>
        <dbReference type="ChEBI" id="CHEBI:29105"/>
    </ligand>
</feature>